<comment type="catalytic activity">
    <reaction>
        <text>L-seryl-[protein] + ATP = O-phospho-L-seryl-[protein] + ADP + H(+)</text>
        <dbReference type="Rhea" id="RHEA:17989"/>
        <dbReference type="Rhea" id="RHEA-COMP:9863"/>
        <dbReference type="Rhea" id="RHEA-COMP:11604"/>
        <dbReference type="ChEBI" id="CHEBI:15378"/>
        <dbReference type="ChEBI" id="CHEBI:29999"/>
        <dbReference type="ChEBI" id="CHEBI:30616"/>
        <dbReference type="ChEBI" id="CHEBI:83421"/>
        <dbReference type="ChEBI" id="CHEBI:456216"/>
        <dbReference type="EC" id="2.7.11.1"/>
    </reaction>
</comment>
<comment type="catalytic activity">
    <reaction>
        <text>L-threonyl-[protein] + ATP = O-phospho-L-threonyl-[protein] + ADP + H(+)</text>
        <dbReference type="Rhea" id="RHEA:46608"/>
        <dbReference type="Rhea" id="RHEA-COMP:11060"/>
        <dbReference type="Rhea" id="RHEA-COMP:11605"/>
        <dbReference type="ChEBI" id="CHEBI:15378"/>
        <dbReference type="ChEBI" id="CHEBI:30013"/>
        <dbReference type="ChEBI" id="CHEBI:30616"/>
        <dbReference type="ChEBI" id="CHEBI:61977"/>
        <dbReference type="ChEBI" id="CHEBI:456216"/>
        <dbReference type="EC" id="2.7.11.1"/>
    </reaction>
</comment>
<comment type="subcellular location">
    <subcellularLocation>
        <location evidence="6">Cell membrane</location>
        <topology evidence="9">Single-pass type I membrane protein</topology>
    </subcellularLocation>
</comment>
<comment type="similarity">
    <text evidence="3">Belongs to the protein kinase superfamily. Ser/Thr protein kinase family.</text>
</comment>
<comment type="sequence caution" evidence="9">
    <conflict type="frameshift">
        <sequence resource="EMBL-CDS" id="AAK97715"/>
    </conflict>
</comment>
<feature type="signal peptide" evidence="2">
    <location>
        <begin position="1"/>
        <end position="19"/>
    </location>
</feature>
<feature type="chain" id="PRO_5005942625" description="LEAF RUST 10 DISEASE-RESISTANCE LOCUS RECEPTOR-LIKE PROTEIN KINASE-like 1.1">
    <location>
        <begin position="20"/>
        <end position="629"/>
    </location>
</feature>
<feature type="topological domain" description="Extracellular" evidence="9">
    <location>
        <begin position="20"/>
        <end position="225"/>
    </location>
</feature>
<feature type="transmembrane region" description="Helical" evidence="2">
    <location>
        <begin position="226"/>
        <end position="246"/>
    </location>
</feature>
<feature type="topological domain" description="Cytoplasmic" evidence="9">
    <location>
        <begin position="247"/>
        <end position="629"/>
    </location>
</feature>
<feature type="domain" description="Protein kinase" evidence="3">
    <location>
        <begin position="291"/>
        <end position="565"/>
    </location>
</feature>
<feature type="region of interest" description="Disordered" evidence="5">
    <location>
        <begin position="609"/>
        <end position="629"/>
    </location>
</feature>
<feature type="active site" description="Proton acceptor" evidence="3">
    <location>
        <position position="416"/>
    </location>
</feature>
<feature type="binding site" evidence="3">
    <location>
        <begin position="297"/>
        <end position="305"/>
    </location>
    <ligand>
        <name>ATP</name>
        <dbReference type="ChEBI" id="CHEBI:30616"/>
    </ligand>
</feature>
<feature type="binding site" evidence="3">
    <location>
        <position position="319"/>
    </location>
    <ligand>
        <name>ATP</name>
        <dbReference type="ChEBI" id="CHEBI:30616"/>
    </ligand>
</feature>
<feature type="modified residue" description="Phosphotyrosine" evidence="1">
    <location>
        <position position="365"/>
    </location>
</feature>
<feature type="modified residue" description="Phosphoserine" evidence="1">
    <location>
        <position position="449"/>
    </location>
</feature>
<feature type="modified residue" description="Phosphothreonine" evidence="1">
    <location>
        <position position="450"/>
    </location>
</feature>
<feature type="modified residue" description="Phosphothreonine" evidence="1">
    <location>
        <position position="455"/>
    </location>
</feature>
<feature type="modified residue" description="Phosphotyrosine" evidence="1">
    <location>
        <position position="463"/>
    </location>
</feature>
<feature type="glycosylation site" description="N-linked (GlcNAc...) asparagine" evidence="4">
    <location>
        <position position="56"/>
    </location>
</feature>
<feature type="glycosylation site" description="N-linked (GlcNAc...) asparagine" evidence="4">
    <location>
        <position position="92"/>
    </location>
</feature>
<feature type="glycosylation site" description="N-linked (GlcNAc...) asparagine" evidence="4">
    <location>
        <position position="123"/>
    </location>
</feature>
<feature type="glycosylation site" description="N-linked (GlcNAc...) asparagine" evidence="4">
    <location>
        <position position="124"/>
    </location>
</feature>
<feature type="glycosylation site" description="N-linked (GlcNAc...) asparagine" evidence="4">
    <location>
        <position position="172"/>
    </location>
</feature>
<feature type="glycosylation site" description="N-linked (GlcNAc...) asparagine" evidence="4">
    <location>
        <position position="177"/>
    </location>
</feature>
<reference key="1">
    <citation type="journal article" date="2000" name="Nature">
        <title>Sequence and analysis of chromosome 1 of the plant Arabidopsis thaliana.</title>
        <authorList>
            <person name="Theologis A."/>
            <person name="Ecker J.R."/>
            <person name="Palm C.J."/>
            <person name="Federspiel N.A."/>
            <person name="Kaul S."/>
            <person name="White O."/>
            <person name="Alonso J."/>
            <person name="Altafi H."/>
            <person name="Araujo R."/>
            <person name="Bowman C.L."/>
            <person name="Brooks S.Y."/>
            <person name="Buehler E."/>
            <person name="Chan A."/>
            <person name="Chao Q."/>
            <person name="Chen H."/>
            <person name="Cheuk R.F."/>
            <person name="Chin C.W."/>
            <person name="Chung M.K."/>
            <person name="Conn L."/>
            <person name="Conway A.B."/>
            <person name="Conway A.R."/>
            <person name="Creasy T.H."/>
            <person name="Dewar K."/>
            <person name="Dunn P."/>
            <person name="Etgu P."/>
            <person name="Feldblyum T.V."/>
            <person name="Feng J.-D."/>
            <person name="Fong B."/>
            <person name="Fujii C.Y."/>
            <person name="Gill J.E."/>
            <person name="Goldsmith A.D."/>
            <person name="Haas B."/>
            <person name="Hansen N.F."/>
            <person name="Hughes B."/>
            <person name="Huizar L."/>
            <person name="Hunter J.L."/>
            <person name="Jenkins J."/>
            <person name="Johnson-Hopson C."/>
            <person name="Khan S."/>
            <person name="Khaykin E."/>
            <person name="Kim C.J."/>
            <person name="Koo H.L."/>
            <person name="Kremenetskaia I."/>
            <person name="Kurtz D.B."/>
            <person name="Kwan A."/>
            <person name="Lam B."/>
            <person name="Langin-Hooper S."/>
            <person name="Lee A."/>
            <person name="Lee J.M."/>
            <person name="Lenz C.A."/>
            <person name="Li J.H."/>
            <person name="Li Y.-P."/>
            <person name="Lin X."/>
            <person name="Liu S.X."/>
            <person name="Liu Z.A."/>
            <person name="Luros J.S."/>
            <person name="Maiti R."/>
            <person name="Marziali A."/>
            <person name="Militscher J."/>
            <person name="Miranda M."/>
            <person name="Nguyen M."/>
            <person name="Nierman W.C."/>
            <person name="Osborne B.I."/>
            <person name="Pai G."/>
            <person name="Peterson J."/>
            <person name="Pham P.K."/>
            <person name="Rizzo M."/>
            <person name="Rooney T."/>
            <person name="Rowley D."/>
            <person name="Sakano H."/>
            <person name="Salzberg S.L."/>
            <person name="Schwartz J.R."/>
            <person name="Shinn P."/>
            <person name="Southwick A.M."/>
            <person name="Sun H."/>
            <person name="Tallon L.J."/>
            <person name="Tambunga G."/>
            <person name="Toriumi M.J."/>
            <person name="Town C.D."/>
            <person name="Utterback T."/>
            <person name="Van Aken S."/>
            <person name="Vaysberg M."/>
            <person name="Vysotskaia V.S."/>
            <person name="Walker M."/>
            <person name="Wu D."/>
            <person name="Yu G."/>
            <person name="Fraser C.M."/>
            <person name="Venter J.C."/>
            <person name="Davis R.W."/>
        </authorList>
    </citation>
    <scope>NUCLEOTIDE SEQUENCE [LARGE SCALE GENOMIC DNA]</scope>
    <source>
        <strain>cv. Columbia</strain>
    </source>
</reference>
<reference key="2">
    <citation type="journal article" date="2017" name="Plant J.">
        <title>Araport11: a complete reannotation of the Arabidopsis thaliana reference genome.</title>
        <authorList>
            <person name="Cheng C.Y."/>
            <person name="Krishnakumar V."/>
            <person name="Chan A.P."/>
            <person name="Thibaud-Nissen F."/>
            <person name="Schobel S."/>
            <person name="Town C.D."/>
        </authorList>
    </citation>
    <scope>GENOME REANNOTATION</scope>
    <source>
        <strain>cv. Columbia</strain>
    </source>
</reference>
<reference key="3">
    <citation type="journal article" date="2003" name="Science">
        <title>Empirical analysis of transcriptional activity in the Arabidopsis genome.</title>
        <authorList>
            <person name="Yamada K."/>
            <person name="Lim J."/>
            <person name="Dale J.M."/>
            <person name="Chen H."/>
            <person name="Shinn P."/>
            <person name="Palm C.J."/>
            <person name="Southwick A.M."/>
            <person name="Wu H.C."/>
            <person name="Kim C.J."/>
            <person name="Nguyen M."/>
            <person name="Pham P.K."/>
            <person name="Cheuk R.F."/>
            <person name="Karlin-Newmann G."/>
            <person name="Liu S.X."/>
            <person name="Lam B."/>
            <person name="Sakano H."/>
            <person name="Wu T."/>
            <person name="Yu G."/>
            <person name="Miranda M."/>
            <person name="Quach H.L."/>
            <person name="Tripp M."/>
            <person name="Chang C.H."/>
            <person name="Lee J.M."/>
            <person name="Toriumi M.J."/>
            <person name="Chan M.M."/>
            <person name="Tang C.C."/>
            <person name="Onodera C.S."/>
            <person name="Deng J.M."/>
            <person name="Akiyama K."/>
            <person name="Ansari Y."/>
            <person name="Arakawa T."/>
            <person name="Banh J."/>
            <person name="Banno F."/>
            <person name="Bowser L."/>
            <person name="Brooks S.Y."/>
            <person name="Carninci P."/>
            <person name="Chao Q."/>
            <person name="Choy N."/>
            <person name="Enju A."/>
            <person name="Goldsmith A.D."/>
            <person name="Gurjal M."/>
            <person name="Hansen N.F."/>
            <person name="Hayashizaki Y."/>
            <person name="Johnson-Hopson C."/>
            <person name="Hsuan V.W."/>
            <person name="Iida K."/>
            <person name="Karnes M."/>
            <person name="Khan S."/>
            <person name="Koesema E."/>
            <person name="Ishida J."/>
            <person name="Jiang P.X."/>
            <person name="Jones T."/>
            <person name="Kawai J."/>
            <person name="Kamiya A."/>
            <person name="Meyers C."/>
            <person name="Nakajima M."/>
            <person name="Narusaka M."/>
            <person name="Seki M."/>
            <person name="Sakurai T."/>
            <person name="Satou M."/>
            <person name="Tamse R."/>
            <person name="Vaysberg M."/>
            <person name="Wallender E.K."/>
            <person name="Wong C."/>
            <person name="Yamamura Y."/>
            <person name="Yuan S."/>
            <person name="Shinozaki K."/>
            <person name="Davis R.W."/>
            <person name="Theologis A."/>
            <person name="Ecker J.R."/>
        </authorList>
    </citation>
    <scope>NUCLEOTIDE SEQUENCE [LARGE SCALE MRNA]</scope>
    <source>
        <strain>cv. Columbia</strain>
    </source>
</reference>
<reference key="4">
    <citation type="journal article" date="2001" name="Proc. Natl. Acad. Sci. U.S.A.">
        <title>Receptor-like kinases from Arabidopsis form a monophyletic gene family related to animal receptor kinases.</title>
        <authorList>
            <person name="Shiu S.H."/>
            <person name="Bleecker A.B."/>
        </authorList>
    </citation>
    <scope>GENE FAMILY</scope>
</reference>
<reference key="5">
    <citation type="journal article" date="2003" name="Plant Physiol.">
        <title>Expansion of the receptor-like kinase/Pelle gene family and receptor-like proteins in Arabidopsis.</title>
        <authorList>
            <person name="Shiu S.H."/>
            <person name="Bleecker A.B."/>
        </authorList>
    </citation>
    <scope>GENE FAMILY</scope>
</reference>
<reference key="6">
    <citation type="journal article" date="2015" name="Plant Cell Rep.">
        <title>Alternative splicing of mini-exons in the Arabidopsis leaf rust receptor-like kinase LRK10 genes affects subcellular localisation.</title>
        <authorList>
            <person name="Shin K.H."/>
            <person name="Yang S.H."/>
            <person name="Lee J.Y."/>
            <person name="Lim C.W."/>
            <person name="Lee S.C."/>
            <person name="Brown J.W."/>
            <person name="Kim S.H."/>
        </authorList>
    </citation>
    <scope>SUBCELLULAR LOCATION</scope>
</reference>
<accession>Q9C6K9</accession>
<accession>Q941D0</accession>
<organism>
    <name type="scientific">Arabidopsis thaliana</name>
    <name type="common">Mouse-ear cress</name>
    <dbReference type="NCBI Taxonomy" id="3702"/>
    <lineage>
        <taxon>Eukaryota</taxon>
        <taxon>Viridiplantae</taxon>
        <taxon>Streptophyta</taxon>
        <taxon>Embryophyta</taxon>
        <taxon>Tracheophyta</taxon>
        <taxon>Spermatophyta</taxon>
        <taxon>Magnoliopsida</taxon>
        <taxon>eudicotyledons</taxon>
        <taxon>Gunneridae</taxon>
        <taxon>Pentapetalae</taxon>
        <taxon>rosids</taxon>
        <taxon>malvids</taxon>
        <taxon>Brassicales</taxon>
        <taxon>Brassicaceae</taxon>
        <taxon>Camelineae</taxon>
        <taxon>Arabidopsis</taxon>
    </lineage>
</organism>
<gene>
    <name evidence="7" type="primary">LRK10L-1.1</name>
    <name evidence="8" type="synonym">LRK10L4</name>
    <name evidence="10" type="ordered locus">At1g25390</name>
    <name evidence="11" type="ORF">F2J7.14</name>
</gene>
<sequence>METVSVLLFFFLFLLAAEARSTKRTGCKDFTCGEHDFKFPFFRTDMPSRCGLFKLNCSANIPEIQLEKDGKWYTVKSVSQANTITIIDPRLNQSLTTGGCSDLSSFSLPDSPWLKLNTLYKCNNSSRKNGFSYANCRGEGSSLYYNLGDDHDVSGCSPIKTPESWVTPKNGNLSDVNATFSLHIELPGNCFRCHNNGGECTKVKNNYRCVGANTEPNNYHAEMRLGLGIGGSVILIIILVALFAVIHRNYRRKDGSELSRDNSKSDVEFSQVFFKIPIFSYKELQAATDNFSKDRLLGDGGFGTVYYGKVRDGREVAVKRLYEHNYRRLEQFMNEIEILTRLHHKNLVSLYGCTSRRSRELLLVYEFIPNGTVADHLYGENTPHQGFLTWSMRLSIAIETASALAYLHASDIIHRDVKTTNILLDRNFGVKVADFGLSRLLPSDVTHVSTAPQGTPGYVDPEYHRCYHLTDKSDVYSFGVVLVELISSKPAVDISRCKSEINLSSLAINKIQNHATHELIDQNLGYATNEGVRKMTTMVAELAFQCLQQDNTMRPTMEQVVHELKGIQNEEQKCPTYDYREETIIPHPSPPDWGEAALLKNMKFPRSPVSVTDQWTSKSTTPNTSAYEF</sequence>
<protein>
    <recommendedName>
        <fullName evidence="7">LEAF RUST 10 DISEASE-RESISTANCE LOCUS RECEPTOR-LIKE PROTEIN KINASE-like 1.1</fullName>
        <ecNumber>2.7.11.1</ecNumber>
    </recommendedName>
    <alternativeName>
        <fullName evidence="9">Probable receptor-like serine/threonine-protein kinase LRK10L-1.1</fullName>
    </alternativeName>
</protein>
<dbReference type="EC" id="2.7.11.1"/>
<dbReference type="EMBL" id="AC079281">
    <property type="protein sequence ID" value="AAG50813.1"/>
    <property type="molecule type" value="Genomic_DNA"/>
</dbReference>
<dbReference type="EMBL" id="CP002684">
    <property type="protein sequence ID" value="AEE30616.1"/>
    <property type="molecule type" value="Genomic_DNA"/>
</dbReference>
<dbReference type="EMBL" id="CP002684">
    <property type="protein sequence ID" value="ANM60432.1"/>
    <property type="molecule type" value="Genomic_DNA"/>
</dbReference>
<dbReference type="EMBL" id="AY052245">
    <property type="protein sequence ID" value="AAK97715.1"/>
    <property type="status" value="ALT_FRAME"/>
    <property type="molecule type" value="mRNA"/>
</dbReference>
<dbReference type="PIR" id="H86383">
    <property type="entry name" value="H86383"/>
</dbReference>
<dbReference type="RefSeq" id="NP_001322718.1">
    <property type="nucleotide sequence ID" value="NM_001332678.1"/>
</dbReference>
<dbReference type="RefSeq" id="NP_173910.1">
    <property type="nucleotide sequence ID" value="NM_102350.3"/>
</dbReference>
<dbReference type="SMR" id="Q9C6K9"/>
<dbReference type="FunCoup" id="Q9C6K9">
    <property type="interactions" value="39"/>
</dbReference>
<dbReference type="STRING" id="3702.Q9C6K9"/>
<dbReference type="GlyCosmos" id="Q9C6K9">
    <property type="glycosylation" value="6 sites, No reported glycans"/>
</dbReference>
<dbReference type="GlyGen" id="Q9C6K9">
    <property type="glycosylation" value="7 sites"/>
</dbReference>
<dbReference type="iPTMnet" id="Q9C6K9"/>
<dbReference type="PaxDb" id="3702-AT1G25390.1"/>
<dbReference type="ProteomicsDB" id="238735"/>
<dbReference type="EnsemblPlants" id="AT1G25390.1">
    <property type="protein sequence ID" value="AT1G25390.1"/>
    <property type="gene ID" value="AT1G25390"/>
</dbReference>
<dbReference type="EnsemblPlants" id="AT1G25390.2">
    <property type="protein sequence ID" value="AT1G25390.2"/>
    <property type="gene ID" value="AT1G25390"/>
</dbReference>
<dbReference type="GeneID" id="839125"/>
<dbReference type="Gramene" id="AT1G25390.1">
    <property type="protein sequence ID" value="AT1G25390.1"/>
    <property type="gene ID" value="AT1G25390"/>
</dbReference>
<dbReference type="Gramene" id="AT1G25390.2">
    <property type="protein sequence ID" value="AT1G25390.2"/>
    <property type="gene ID" value="AT1G25390"/>
</dbReference>
<dbReference type="KEGG" id="ath:AT1G25390"/>
<dbReference type="Araport" id="AT1G25390"/>
<dbReference type="TAIR" id="AT1G25390">
    <property type="gene designation" value="LRK10L4"/>
</dbReference>
<dbReference type="eggNOG" id="KOG1187">
    <property type="taxonomic scope" value="Eukaryota"/>
</dbReference>
<dbReference type="HOGENOM" id="CLU_000288_115_3_1"/>
<dbReference type="InParanoid" id="Q9C6K9"/>
<dbReference type="OMA" id="IKNMKFP"/>
<dbReference type="OrthoDB" id="4062651at2759"/>
<dbReference type="PhylomeDB" id="Q9C6K9"/>
<dbReference type="PRO" id="PR:Q9C6K9"/>
<dbReference type="Proteomes" id="UP000006548">
    <property type="component" value="Chromosome 1"/>
</dbReference>
<dbReference type="ExpressionAtlas" id="Q9C6K9">
    <property type="expression patterns" value="baseline and differential"/>
</dbReference>
<dbReference type="GO" id="GO:0005886">
    <property type="term" value="C:plasma membrane"/>
    <property type="evidence" value="ECO:0000314"/>
    <property type="project" value="UniProtKB"/>
</dbReference>
<dbReference type="GO" id="GO:0005524">
    <property type="term" value="F:ATP binding"/>
    <property type="evidence" value="ECO:0007669"/>
    <property type="project" value="UniProtKB-KW"/>
</dbReference>
<dbReference type="GO" id="GO:0030247">
    <property type="term" value="F:polysaccharide binding"/>
    <property type="evidence" value="ECO:0007669"/>
    <property type="project" value="InterPro"/>
</dbReference>
<dbReference type="GO" id="GO:0106310">
    <property type="term" value="F:protein serine kinase activity"/>
    <property type="evidence" value="ECO:0007669"/>
    <property type="project" value="RHEA"/>
</dbReference>
<dbReference type="GO" id="GO:0004674">
    <property type="term" value="F:protein serine/threonine kinase activity"/>
    <property type="evidence" value="ECO:0007669"/>
    <property type="project" value="UniProtKB-KW"/>
</dbReference>
<dbReference type="FunFam" id="3.30.200.20:FF:000214">
    <property type="entry name" value="WAK1-OsWAK receptor-like cytoplasmic kinase (OsWAK-RLCK)"/>
    <property type="match status" value="1"/>
</dbReference>
<dbReference type="FunFam" id="1.10.510.10:FF:000161">
    <property type="entry name" value="Wall-associated receptor kinase-like 20"/>
    <property type="match status" value="1"/>
</dbReference>
<dbReference type="Gene3D" id="3.30.200.20">
    <property type="entry name" value="Phosphorylase Kinase, domain 1"/>
    <property type="match status" value="1"/>
</dbReference>
<dbReference type="Gene3D" id="1.10.510.10">
    <property type="entry name" value="Transferase(Phosphotransferase) domain 1"/>
    <property type="match status" value="1"/>
</dbReference>
<dbReference type="InterPro" id="IPR011009">
    <property type="entry name" value="Kinase-like_dom_sf"/>
</dbReference>
<dbReference type="InterPro" id="IPR000719">
    <property type="entry name" value="Prot_kinase_dom"/>
</dbReference>
<dbReference type="InterPro" id="IPR017441">
    <property type="entry name" value="Protein_kinase_ATP_BS"/>
</dbReference>
<dbReference type="InterPro" id="IPR001245">
    <property type="entry name" value="Ser-Thr/Tyr_kinase_cat_dom"/>
</dbReference>
<dbReference type="InterPro" id="IPR008271">
    <property type="entry name" value="Ser/Thr_kinase_AS"/>
</dbReference>
<dbReference type="InterPro" id="IPR025287">
    <property type="entry name" value="WAK_GUB"/>
</dbReference>
<dbReference type="PANTHER" id="PTHR46008:SF57">
    <property type="entry name" value="LEAF RUST 10 DISEASE-RESISTANCE LOCUS RECEPTOR-LIKE PROTEIN KINASE-LIKE 1.1"/>
    <property type="match status" value="1"/>
</dbReference>
<dbReference type="PANTHER" id="PTHR46008">
    <property type="entry name" value="LEAF RUST 10 DISEASE-RESISTANCE LOCUS RECEPTOR-LIKE PROTEIN KINASE-LIKE 1.4"/>
    <property type="match status" value="1"/>
</dbReference>
<dbReference type="Pfam" id="PF13947">
    <property type="entry name" value="GUB_WAK_bind"/>
    <property type="match status" value="1"/>
</dbReference>
<dbReference type="Pfam" id="PF07714">
    <property type="entry name" value="PK_Tyr_Ser-Thr"/>
    <property type="match status" value="1"/>
</dbReference>
<dbReference type="SMART" id="SM00220">
    <property type="entry name" value="S_TKc"/>
    <property type="match status" value="1"/>
</dbReference>
<dbReference type="SUPFAM" id="SSF56112">
    <property type="entry name" value="Protein kinase-like (PK-like)"/>
    <property type="match status" value="1"/>
</dbReference>
<dbReference type="PROSITE" id="PS00107">
    <property type="entry name" value="PROTEIN_KINASE_ATP"/>
    <property type="match status" value="1"/>
</dbReference>
<dbReference type="PROSITE" id="PS50011">
    <property type="entry name" value="PROTEIN_KINASE_DOM"/>
    <property type="match status" value="1"/>
</dbReference>
<dbReference type="PROSITE" id="PS00108">
    <property type="entry name" value="PROTEIN_KINASE_ST"/>
    <property type="match status" value="1"/>
</dbReference>
<evidence type="ECO:0000250" key="1">
    <source>
        <dbReference type="UniProtKB" id="O48814"/>
    </source>
</evidence>
<evidence type="ECO:0000255" key="2"/>
<evidence type="ECO:0000255" key="3">
    <source>
        <dbReference type="PROSITE-ProRule" id="PRU00159"/>
    </source>
</evidence>
<evidence type="ECO:0000255" key="4">
    <source>
        <dbReference type="PROSITE-ProRule" id="PRU00498"/>
    </source>
</evidence>
<evidence type="ECO:0000256" key="5">
    <source>
        <dbReference type="SAM" id="MobiDB-lite"/>
    </source>
</evidence>
<evidence type="ECO:0000269" key="6">
    <source>
    </source>
</evidence>
<evidence type="ECO:0000303" key="7">
    <source>
    </source>
</evidence>
<evidence type="ECO:0000303" key="8">
    <source>
    </source>
</evidence>
<evidence type="ECO:0000305" key="9"/>
<evidence type="ECO:0000312" key="10">
    <source>
        <dbReference type="Araport" id="AT1G25390"/>
    </source>
</evidence>
<evidence type="ECO:0000312" key="11">
    <source>
        <dbReference type="EMBL" id="AAG50813.1"/>
    </source>
</evidence>
<name>LRL11_ARATH</name>
<proteinExistence type="evidence at transcript level"/>
<keyword id="KW-0067">ATP-binding</keyword>
<keyword id="KW-1003">Cell membrane</keyword>
<keyword id="KW-0325">Glycoprotein</keyword>
<keyword id="KW-0418">Kinase</keyword>
<keyword id="KW-0472">Membrane</keyword>
<keyword id="KW-0547">Nucleotide-binding</keyword>
<keyword id="KW-0597">Phosphoprotein</keyword>
<keyword id="KW-0675">Receptor</keyword>
<keyword id="KW-1185">Reference proteome</keyword>
<keyword id="KW-0723">Serine/threonine-protein kinase</keyword>
<keyword id="KW-0732">Signal</keyword>
<keyword id="KW-0808">Transferase</keyword>
<keyword id="KW-0812">Transmembrane</keyword>
<keyword id="KW-1133">Transmembrane helix</keyword>